<accession>Q9Z211</accession>
<accession>Q8C5B8</accession>
<gene>
    <name type="primary">Pex11a</name>
</gene>
<protein>
    <recommendedName>
        <fullName>Peroxisomal membrane protein 11A</fullName>
    </recommendedName>
    <alternativeName>
        <fullName>Peroxin-11A</fullName>
    </alternativeName>
    <alternativeName>
        <fullName>Peroxisomal biogenesis factor 11A</fullName>
    </alternativeName>
    <alternativeName>
        <fullName>Protein PEX11 homolog alpha</fullName>
        <shortName>PEX11-alpha</shortName>
    </alternativeName>
</protein>
<name>PX11A_MOUSE</name>
<reference key="1">
    <citation type="journal article" date="1998" name="J. Biol. Chem.">
        <title>Expression of PEX11beta mediates peroxisome proliferation in the absence of extracellular stimuli.</title>
        <authorList>
            <person name="Schrader M."/>
            <person name="Reuber B.E."/>
            <person name="Morrell J.C."/>
            <person name="Jimenez-Sanchez G."/>
            <person name="Obie C."/>
            <person name="Stroh T.A."/>
            <person name="Valle D."/>
            <person name="Schroer T.A."/>
            <person name="Gould S.J."/>
        </authorList>
    </citation>
    <scope>NUCLEOTIDE SEQUENCE [MRNA]</scope>
</reference>
<reference key="2">
    <citation type="journal article" date="2004" name="Genome Res.">
        <title>The status, quality, and expansion of the NIH full-length cDNA project: the Mammalian Gene Collection (MGC).</title>
        <authorList>
            <consortium name="The MGC Project Team"/>
        </authorList>
    </citation>
    <scope>NUCLEOTIDE SEQUENCE [LARGE SCALE MRNA]</scope>
    <source>
        <strain>C57BL/6J</strain>
        <strain>FVB/N</strain>
        <tissue>Mammary tumor</tissue>
    </source>
</reference>
<reference key="3">
    <citation type="journal article" date="2005" name="Science">
        <title>The transcriptional landscape of the mammalian genome.</title>
        <authorList>
            <person name="Carninci P."/>
            <person name="Kasukawa T."/>
            <person name="Katayama S."/>
            <person name="Gough J."/>
            <person name="Frith M.C."/>
            <person name="Maeda N."/>
            <person name="Oyama R."/>
            <person name="Ravasi T."/>
            <person name="Lenhard B."/>
            <person name="Wells C."/>
            <person name="Kodzius R."/>
            <person name="Shimokawa K."/>
            <person name="Bajic V.B."/>
            <person name="Brenner S.E."/>
            <person name="Batalov S."/>
            <person name="Forrest A.R."/>
            <person name="Zavolan M."/>
            <person name="Davis M.J."/>
            <person name="Wilming L.G."/>
            <person name="Aidinis V."/>
            <person name="Allen J.E."/>
            <person name="Ambesi-Impiombato A."/>
            <person name="Apweiler R."/>
            <person name="Aturaliya R.N."/>
            <person name="Bailey T.L."/>
            <person name="Bansal M."/>
            <person name="Baxter L."/>
            <person name="Beisel K.W."/>
            <person name="Bersano T."/>
            <person name="Bono H."/>
            <person name="Chalk A.M."/>
            <person name="Chiu K.P."/>
            <person name="Choudhary V."/>
            <person name="Christoffels A."/>
            <person name="Clutterbuck D.R."/>
            <person name="Crowe M.L."/>
            <person name="Dalla E."/>
            <person name="Dalrymple B.P."/>
            <person name="de Bono B."/>
            <person name="Della Gatta G."/>
            <person name="di Bernardo D."/>
            <person name="Down T."/>
            <person name="Engstrom P."/>
            <person name="Fagiolini M."/>
            <person name="Faulkner G."/>
            <person name="Fletcher C.F."/>
            <person name="Fukushima T."/>
            <person name="Furuno M."/>
            <person name="Futaki S."/>
            <person name="Gariboldi M."/>
            <person name="Georgii-Hemming P."/>
            <person name="Gingeras T.R."/>
            <person name="Gojobori T."/>
            <person name="Green R.E."/>
            <person name="Gustincich S."/>
            <person name="Harbers M."/>
            <person name="Hayashi Y."/>
            <person name="Hensch T.K."/>
            <person name="Hirokawa N."/>
            <person name="Hill D."/>
            <person name="Huminiecki L."/>
            <person name="Iacono M."/>
            <person name="Ikeo K."/>
            <person name="Iwama A."/>
            <person name="Ishikawa T."/>
            <person name="Jakt M."/>
            <person name="Kanapin A."/>
            <person name="Katoh M."/>
            <person name="Kawasawa Y."/>
            <person name="Kelso J."/>
            <person name="Kitamura H."/>
            <person name="Kitano H."/>
            <person name="Kollias G."/>
            <person name="Krishnan S.P."/>
            <person name="Kruger A."/>
            <person name="Kummerfeld S.K."/>
            <person name="Kurochkin I.V."/>
            <person name="Lareau L.F."/>
            <person name="Lazarevic D."/>
            <person name="Lipovich L."/>
            <person name="Liu J."/>
            <person name="Liuni S."/>
            <person name="McWilliam S."/>
            <person name="Madan Babu M."/>
            <person name="Madera M."/>
            <person name="Marchionni L."/>
            <person name="Matsuda H."/>
            <person name="Matsuzawa S."/>
            <person name="Miki H."/>
            <person name="Mignone F."/>
            <person name="Miyake S."/>
            <person name="Morris K."/>
            <person name="Mottagui-Tabar S."/>
            <person name="Mulder N."/>
            <person name="Nakano N."/>
            <person name="Nakauchi H."/>
            <person name="Ng P."/>
            <person name="Nilsson R."/>
            <person name="Nishiguchi S."/>
            <person name="Nishikawa S."/>
            <person name="Nori F."/>
            <person name="Ohara O."/>
            <person name="Okazaki Y."/>
            <person name="Orlando V."/>
            <person name="Pang K.C."/>
            <person name="Pavan W.J."/>
            <person name="Pavesi G."/>
            <person name="Pesole G."/>
            <person name="Petrovsky N."/>
            <person name="Piazza S."/>
            <person name="Reed J."/>
            <person name="Reid J.F."/>
            <person name="Ring B.Z."/>
            <person name="Ringwald M."/>
            <person name="Rost B."/>
            <person name="Ruan Y."/>
            <person name="Salzberg S.L."/>
            <person name="Sandelin A."/>
            <person name="Schneider C."/>
            <person name="Schoenbach C."/>
            <person name="Sekiguchi K."/>
            <person name="Semple C.A."/>
            <person name="Seno S."/>
            <person name="Sessa L."/>
            <person name="Sheng Y."/>
            <person name="Shibata Y."/>
            <person name="Shimada H."/>
            <person name="Shimada K."/>
            <person name="Silva D."/>
            <person name="Sinclair B."/>
            <person name="Sperling S."/>
            <person name="Stupka E."/>
            <person name="Sugiura K."/>
            <person name="Sultana R."/>
            <person name="Takenaka Y."/>
            <person name="Taki K."/>
            <person name="Tammoja K."/>
            <person name="Tan S.L."/>
            <person name="Tang S."/>
            <person name="Taylor M.S."/>
            <person name="Tegner J."/>
            <person name="Teichmann S.A."/>
            <person name="Ueda H.R."/>
            <person name="van Nimwegen E."/>
            <person name="Verardo R."/>
            <person name="Wei C.L."/>
            <person name="Yagi K."/>
            <person name="Yamanishi H."/>
            <person name="Zabarovsky E."/>
            <person name="Zhu S."/>
            <person name="Zimmer A."/>
            <person name="Hide W."/>
            <person name="Bult C."/>
            <person name="Grimmond S.M."/>
            <person name="Teasdale R.D."/>
            <person name="Liu E.T."/>
            <person name="Brusic V."/>
            <person name="Quackenbush J."/>
            <person name="Wahlestedt C."/>
            <person name="Mattick J.S."/>
            <person name="Hume D.A."/>
            <person name="Kai C."/>
            <person name="Sasaki D."/>
            <person name="Tomaru Y."/>
            <person name="Fukuda S."/>
            <person name="Kanamori-Katayama M."/>
            <person name="Suzuki M."/>
            <person name="Aoki J."/>
            <person name="Arakawa T."/>
            <person name="Iida J."/>
            <person name="Imamura K."/>
            <person name="Itoh M."/>
            <person name="Kato T."/>
            <person name="Kawaji H."/>
            <person name="Kawagashira N."/>
            <person name="Kawashima T."/>
            <person name="Kojima M."/>
            <person name="Kondo S."/>
            <person name="Konno H."/>
            <person name="Nakano K."/>
            <person name="Ninomiya N."/>
            <person name="Nishio T."/>
            <person name="Okada M."/>
            <person name="Plessy C."/>
            <person name="Shibata K."/>
            <person name="Shiraki T."/>
            <person name="Suzuki S."/>
            <person name="Tagami M."/>
            <person name="Waki K."/>
            <person name="Watahiki A."/>
            <person name="Okamura-Oho Y."/>
            <person name="Suzuki H."/>
            <person name="Kawai J."/>
            <person name="Hayashizaki Y."/>
        </authorList>
    </citation>
    <scope>NUCLEOTIDE SEQUENCE [LARGE SCALE MRNA] OF 37-246</scope>
    <source>
        <strain>C57BL/6J</strain>
        <tissue>Cecum</tissue>
    </source>
</reference>
<reference key="4">
    <citation type="journal article" date="2002" name="Mol. Cell. Biol.">
        <title>PEX11alpha is required for peroxisome proliferation in response to 4-phenylbutyrate but is dispensable for peroxisome proliferator-activated receptor alpha-mediated peroxisome proliferation.</title>
        <authorList>
            <person name="Li X."/>
            <person name="Baumgart E."/>
            <person name="Dong G.-X."/>
            <person name="Morrell J.C."/>
            <person name="Jimenez-Sanchez G."/>
            <person name="Valle D."/>
            <person name="Smith K.D."/>
            <person name="Gould S.J."/>
        </authorList>
    </citation>
    <scope>FUNCTION</scope>
    <scope>TISSUE SPECIFICITY</scope>
    <scope>INDUCTION</scope>
    <scope>DISRUPTION PHENOTYPE</scope>
</reference>
<reference key="5">
    <citation type="journal article" date="2010" name="Cell">
        <title>A tissue-specific atlas of mouse protein phosphorylation and expression.</title>
        <authorList>
            <person name="Huttlin E.L."/>
            <person name="Jedrychowski M.P."/>
            <person name="Elias J.E."/>
            <person name="Goswami T."/>
            <person name="Rad R."/>
            <person name="Beausoleil S.A."/>
            <person name="Villen J."/>
            <person name="Haas W."/>
            <person name="Sowa M.E."/>
            <person name="Gygi S.P."/>
        </authorList>
    </citation>
    <scope>IDENTIFICATION BY MASS SPECTROMETRY [LARGE SCALE ANALYSIS]</scope>
    <source>
        <tissue>Kidney</tissue>
        <tissue>Liver</tissue>
        <tissue>Testis</tissue>
    </source>
</reference>
<organism>
    <name type="scientific">Mus musculus</name>
    <name type="common">Mouse</name>
    <dbReference type="NCBI Taxonomy" id="10090"/>
    <lineage>
        <taxon>Eukaryota</taxon>
        <taxon>Metazoa</taxon>
        <taxon>Chordata</taxon>
        <taxon>Craniata</taxon>
        <taxon>Vertebrata</taxon>
        <taxon>Euteleostomi</taxon>
        <taxon>Mammalia</taxon>
        <taxon>Eutheria</taxon>
        <taxon>Euarchontoglires</taxon>
        <taxon>Glires</taxon>
        <taxon>Rodentia</taxon>
        <taxon>Myomorpha</taxon>
        <taxon>Muroidea</taxon>
        <taxon>Muridae</taxon>
        <taxon>Murinae</taxon>
        <taxon>Mus</taxon>
        <taxon>Mus</taxon>
    </lineage>
</organism>
<evidence type="ECO:0000250" key="1">
    <source>
        <dbReference type="UniProtKB" id="O70597"/>
    </source>
</evidence>
<evidence type="ECO:0000250" key="2">
    <source>
        <dbReference type="UniProtKB" id="O75192"/>
    </source>
</evidence>
<evidence type="ECO:0000255" key="3"/>
<evidence type="ECO:0000269" key="4">
    <source>
    </source>
</evidence>
<evidence type="ECO:0000305" key="5"/>
<dbReference type="EMBL" id="AF093669">
    <property type="protein sequence ID" value="AAC78659.1"/>
    <property type="molecule type" value="mRNA"/>
</dbReference>
<dbReference type="EMBL" id="BC023439">
    <property type="protein sequence ID" value="AAH23439.1"/>
    <property type="molecule type" value="mRNA"/>
</dbReference>
<dbReference type="EMBL" id="AK078954">
    <property type="protein sequence ID" value="BAC37477.1"/>
    <property type="molecule type" value="mRNA"/>
</dbReference>
<dbReference type="CCDS" id="CCDS21386.1"/>
<dbReference type="RefSeq" id="NP_035198.1">
    <property type="nucleotide sequence ID" value="NM_011068.2"/>
</dbReference>
<dbReference type="SMR" id="Q9Z211"/>
<dbReference type="FunCoup" id="Q9Z211">
    <property type="interactions" value="137"/>
</dbReference>
<dbReference type="STRING" id="10090.ENSMUSP00000032761"/>
<dbReference type="GlyGen" id="Q9Z211">
    <property type="glycosylation" value="1 site, 1 O-linked glycan (1 site)"/>
</dbReference>
<dbReference type="iPTMnet" id="Q9Z211"/>
<dbReference type="PhosphoSitePlus" id="Q9Z211"/>
<dbReference type="SwissPalm" id="Q9Z211"/>
<dbReference type="jPOST" id="Q9Z211"/>
<dbReference type="PaxDb" id="10090-ENSMUSP00000032761"/>
<dbReference type="ProteomicsDB" id="301834"/>
<dbReference type="Antibodypedia" id="28643">
    <property type="antibodies" value="158 antibodies from 25 providers"/>
</dbReference>
<dbReference type="DNASU" id="18631"/>
<dbReference type="Ensembl" id="ENSMUST00000032761.8">
    <property type="protein sequence ID" value="ENSMUSP00000032761.8"/>
    <property type="gene ID" value="ENSMUSG00000030545.10"/>
</dbReference>
<dbReference type="GeneID" id="18631"/>
<dbReference type="KEGG" id="mmu:18631"/>
<dbReference type="UCSC" id="uc009hyy.1">
    <property type="organism name" value="mouse"/>
</dbReference>
<dbReference type="AGR" id="MGI:1338788"/>
<dbReference type="CTD" id="8800"/>
<dbReference type="MGI" id="MGI:1338788">
    <property type="gene designation" value="Pex11a"/>
</dbReference>
<dbReference type="VEuPathDB" id="HostDB:ENSMUSG00000030545"/>
<dbReference type="eggNOG" id="KOG4186">
    <property type="taxonomic scope" value="Eukaryota"/>
</dbReference>
<dbReference type="GeneTree" id="ENSGT00390000014273"/>
<dbReference type="HOGENOM" id="CLU_049216_2_0_1"/>
<dbReference type="InParanoid" id="Q9Z211"/>
<dbReference type="OMA" id="AKRTMQL"/>
<dbReference type="OrthoDB" id="411017at2759"/>
<dbReference type="PhylomeDB" id="Q9Z211"/>
<dbReference type="TreeFam" id="TF325704"/>
<dbReference type="BioGRID-ORCS" id="18631">
    <property type="hits" value="2 hits in 77 CRISPR screens"/>
</dbReference>
<dbReference type="PRO" id="PR:Q9Z211"/>
<dbReference type="Proteomes" id="UP000000589">
    <property type="component" value="Chromosome 7"/>
</dbReference>
<dbReference type="RNAct" id="Q9Z211">
    <property type="molecule type" value="protein"/>
</dbReference>
<dbReference type="Bgee" id="ENSMUSG00000030545">
    <property type="expression patterns" value="Expressed in gonadal fat pad and 250 other cell types or tissues"/>
</dbReference>
<dbReference type="GO" id="GO:0005778">
    <property type="term" value="C:peroxisomal membrane"/>
    <property type="evidence" value="ECO:0000250"/>
    <property type="project" value="UniProtKB"/>
</dbReference>
<dbReference type="GO" id="GO:0005777">
    <property type="term" value="C:peroxisome"/>
    <property type="evidence" value="ECO:0000266"/>
    <property type="project" value="MGI"/>
</dbReference>
<dbReference type="GO" id="GO:0032991">
    <property type="term" value="C:protein-containing complex"/>
    <property type="evidence" value="ECO:0007669"/>
    <property type="project" value="Ensembl"/>
</dbReference>
<dbReference type="GO" id="GO:0042803">
    <property type="term" value="F:protein homodimerization activity"/>
    <property type="evidence" value="ECO:0007669"/>
    <property type="project" value="Ensembl"/>
</dbReference>
<dbReference type="GO" id="GO:0050873">
    <property type="term" value="P:brown fat cell differentiation"/>
    <property type="evidence" value="ECO:0000314"/>
    <property type="project" value="MGI"/>
</dbReference>
<dbReference type="GO" id="GO:0016559">
    <property type="term" value="P:peroxisome fission"/>
    <property type="evidence" value="ECO:0007669"/>
    <property type="project" value="Ensembl"/>
</dbReference>
<dbReference type="GO" id="GO:0016557">
    <property type="term" value="P:peroxisome membrane biogenesis"/>
    <property type="evidence" value="ECO:0007669"/>
    <property type="project" value="Ensembl"/>
</dbReference>
<dbReference type="GO" id="GO:0007031">
    <property type="term" value="P:peroxisome organization"/>
    <property type="evidence" value="ECO:0000250"/>
    <property type="project" value="UniProtKB"/>
</dbReference>
<dbReference type="GO" id="GO:0044375">
    <property type="term" value="P:regulation of peroxisome size"/>
    <property type="evidence" value="ECO:0007669"/>
    <property type="project" value="Ensembl"/>
</dbReference>
<dbReference type="GO" id="GO:0007165">
    <property type="term" value="P:signal transduction"/>
    <property type="evidence" value="ECO:0000250"/>
    <property type="project" value="UniProtKB"/>
</dbReference>
<dbReference type="InterPro" id="IPR008733">
    <property type="entry name" value="PEX11"/>
</dbReference>
<dbReference type="PANTHER" id="PTHR12652">
    <property type="entry name" value="PEROXISOMAL BIOGENESIS FACTOR 11"/>
    <property type="match status" value="1"/>
</dbReference>
<dbReference type="PANTHER" id="PTHR12652:SF22">
    <property type="entry name" value="PEROXISOMAL MEMBRANE PROTEIN 11A"/>
    <property type="match status" value="1"/>
</dbReference>
<dbReference type="Pfam" id="PF05648">
    <property type="entry name" value="PEX11"/>
    <property type="match status" value="1"/>
</dbReference>
<comment type="function">
    <text evidence="1 2 4">May be involved in peroxisomal proliferation and may regulate peroxisomes division. May mediate binding of coatomer proteins to the peroxisomal membrane (By similarity). Promotes membrane protrusion and elongation on the peroxisomal surface.</text>
</comment>
<comment type="subunit">
    <text evidence="1 2">Homodimer. Heterodimer with PEX11G. Probably interacts with COPB2 and COPA. Interacts with PEX19. Interacts with FIS1.</text>
</comment>
<comment type="subcellular location">
    <subcellularLocation>
        <location evidence="2">Peroxisome membrane</location>
        <topology evidence="2">Multi-pass membrane protein</topology>
    </subcellularLocation>
</comment>
<comment type="tissue specificity">
    <text evidence="4">Strongly expressed in liver and at lower levels in heart, brain, kidney and testis.</text>
</comment>
<comment type="induction">
    <text evidence="4">By ciprofibrate.</text>
</comment>
<comment type="disruption phenotype">
    <text evidence="4">Mice have no detectable defect in constitutive peroxisome division and display a normal peroxisome proliferation response when exposed to PPARalpha-activating drugs. However, they are defective in peroxisome proliferation induced by 4-phenylbutyrate (4-PBA).</text>
</comment>
<comment type="similarity">
    <text evidence="5">Belongs to the peroxin-11 family.</text>
</comment>
<proteinExistence type="evidence at protein level"/>
<keyword id="KW-0472">Membrane</keyword>
<keyword id="KW-0576">Peroxisome</keyword>
<keyword id="KW-0962">Peroxisome biogenesis</keyword>
<keyword id="KW-1185">Reference proteome</keyword>
<keyword id="KW-0812">Transmembrane</keyword>
<keyword id="KW-1133">Transmembrane helix</keyword>
<feature type="chain" id="PRO_0000105965" description="Peroxisomal membrane protein 11A">
    <location>
        <begin position="1"/>
        <end position="246"/>
    </location>
</feature>
<feature type="topological domain" description="Cytoplasmic" evidence="3">
    <location>
        <begin position="1"/>
        <end position="93"/>
    </location>
</feature>
<feature type="transmembrane region" description="Helical" evidence="3">
    <location>
        <begin position="94"/>
        <end position="114"/>
    </location>
</feature>
<feature type="topological domain" description="Lumenal" evidence="3">
    <location>
        <begin position="115"/>
        <end position="217"/>
    </location>
</feature>
<feature type="transmembrane region" description="Helical" evidence="3">
    <location>
        <begin position="218"/>
        <end position="238"/>
    </location>
</feature>
<feature type="topological domain" description="Cytoplasmic" evidence="3">
    <location>
        <begin position="239"/>
        <end position="246"/>
    </location>
</feature>
<feature type="region of interest" description="Required for homodimerization, interaction with PEX11G, and peroxisomal localization" evidence="2">
    <location>
        <begin position="218"/>
        <end position="238"/>
    </location>
</feature>
<sequence>MDAFIRVANQSQGRDRLFRATQHACMLLRYLLESKADKEAVVLKLKRLETSVSTGRKWFRLGNVFHAIQATEQSIQAADLAPRLCLTLANLNRVVYYICDTVLWAKSVGLTSGVNREKWQRWAARHYYYFLLLSLVRDLYEILLQMGQVARDRAKREKSSRDPPKYSVANEETEWLQSFLLLLFQSLKRHPPLLLDTVKNFCDILIPLNQLGIYKSNLGVVGLGGLISSLAGLLTVVYPQLKLKAR</sequence>